<proteinExistence type="inferred from homology"/>
<name>SYA_SERP5</name>
<protein>
    <recommendedName>
        <fullName evidence="1">Alanine--tRNA ligase</fullName>
        <ecNumber evidence="1">6.1.1.7</ecNumber>
    </recommendedName>
    <alternativeName>
        <fullName evidence="1">Alanyl-tRNA synthetase</fullName>
        <shortName evidence="1">AlaRS</shortName>
    </alternativeName>
</protein>
<evidence type="ECO:0000255" key="1">
    <source>
        <dbReference type="HAMAP-Rule" id="MF_00036"/>
    </source>
</evidence>
<evidence type="ECO:0000305" key="2"/>
<feature type="chain" id="PRO_0000347779" description="Alanine--tRNA ligase">
    <location>
        <begin position="1"/>
        <end position="875"/>
    </location>
</feature>
<feature type="binding site" evidence="1">
    <location>
        <position position="564"/>
    </location>
    <ligand>
        <name>Zn(2+)</name>
        <dbReference type="ChEBI" id="CHEBI:29105"/>
    </ligand>
</feature>
<feature type="binding site" evidence="1">
    <location>
        <position position="568"/>
    </location>
    <ligand>
        <name>Zn(2+)</name>
        <dbReference type="ChEBI" id="CHEBI:29105"/>
    </ligand>
</feature>
<feature type="binding site" evidence="1">
    <location>
        <position position="666"/>
    </location>
    <ligand>
        <name>Zn(2+)</name>
        <dbReference type="ChEBI" id="CHEBI:29105"/>
    </ligand>
</feature>
<feature type="binding site" evidence="1">
    <location>
        <position position="670"/>
    </location>
    <ligand>
        <name>Zn(2+)</name>
        <dbReference type="ChEBI" id="CHEBI:29105"/>
    </ligand>
</feature>
<sequence>MSKSTAEIRQAFLDFFHSKGHQVVASSSLVPDNDPTLLFTNAGMNQFKDVFLGLDKRAYSRATTSQRCVRAGGKHNDLENVGYTARHHTFFEMLGNFSFGDYFKHDAISYAWELLTGENWFNLPKERLWVTVYETDDEAFDIWQQQIGVPAERIIRIGDNKGGAFASDNFWQMGDTGPCGPCTEIFYDHGDHIWGGPPGSPEEDGDRYIEIWNLVFMQFNRQSDGTMLPLPKPSVDTGMGLERIAAVLQHVNSNYEIDLFSKLIAAVAKVTGATDLDNKSLRVIADHIRSCAFLVSDGVTPSNEGRGYVLRRIIRRAVRHGNMLGAKDTFFYKLVAPLIEVMGPAADELKRQQSLVEQVLKTEEDQFARTLERGLTLLDEELANLQGDTLDGETAFRLYDTYGFPVDLTADVCRERGLKVDEAGFEQAMEAQRRRARESSGFGADYNSMIRVDGASQFSGYDHEQQQSTVTALFRDGQPVNEIHAGEEAVVVLDETPFYGESGGQVGDKGVLKAANADFEVSDTQKYGQAIGHQGKLSHGSLKVNDRVDAKIDTVRRNRIRLNHSATHLLHAALRQTLGEHVAQKGSLVNDKYLRFDFSHFEAMKPEQIRTVEDLVNQQIRRNLPVQTEVMALDDAKGKGAMALFGEKYDDNVRVLTMGDFSTELCGGTHASRTGDIGLFRILSESGTAAGIRRIEAVTGDGAIATLHQQNDLLQDVAHLVKGDSNNLTDKVRAVLDRTRALEKELQQLKDQQAAQESASLSSKAKMVNGVQLLVSQLDNVEAKMLRTMVDDLKNQLGSAIIVLATTADDKVSLIAGVTKDLTDRVKAGELIGNVAQQVGGKGGGRPDMAQAGGTDVSALPAALDSVEAWVASKL</sequence>
<accession>A8GA09</accession>
<comment type="function">
    <text evidence="1">Catalyzes the attachment of alanine to tRNA(Ala) in a two-step reaction: alanine is first activated by ATP to form Ala-AMP and then transferred to the acceptor end of tRNA(Ala). Also edits incorrectly charged Ser-tRNA(Ala) and Gly-tRNA(Ala) via its editing domain.</text>
</comment>
<comment type="catalytic activity">
    <reaction evidence="1">
        <text>tRNA(Ala) + L-alanine + ATP = L-alanyl-tRNA(Ala) + AMP + diphosphate</text>
        <dbReference type="Rhea" id="RHEA:12540"/>
        <dbReference type="Rhea" id="RHEA-COMP:9657"/>
        <dbReference type="Rhea" id="RHEA-COMP:9923"/>
        <dbReference type="ChEBI" id="CHEBI:30616"/>
        <dbReference type="ChEBI" id="CHEBI:33019"/>
        <dbReference type="ChEBI" id="CHEBI:57972"/>
        <dbReference type="ChEBI" id="CHEBI:78442"/>
        <dbReference type="ChEBI" id="CHEBI:78497"/>
        <dbReference type="ChEBI" id="CHEBI:456215"/>
        <dbReference type="EC" id="6.1.1.7"/>
    </reaction>
</comment>
<comment type="cofactor">
    <cofactor evidence="1">
        <name>Zn(2+)</name>
        <dbReference type="ChEBI" id="CHEBI:29105"/>
    </cofactor>
    <text evidence="1">Binds 1 zinc ion per subunit.</text>
</comment>
<comment type="subunit">
    <text evidence="1">Homotetramer.</text>
</comment>
<comment type="subcellular location">
    <subcellularLocation>
        <location evidence="1">Cytoplasm</location>
    </subcellularLocation>
</comment>
<comment type="domain">
    <text evidence="1">Consists of three domains; the N-terminal catalytic domain, the editing domain and the C-terminal C-Ala domain. The editing domain removes incorrectly charged amino acids, while the C-Ala domain, along with tRNA(Ala), serves as a bridge to cooperatively bring together the editing and aminoacylation centers thus stimulating deacylation of misacylated tRNAs.</text>
</comment>
<comment type="similarity">
    <text evidence="1">Belongs to the class-II aminoacyl-tRNA synthetase family.</text>
</comment>
<comment type="sequence caution" evidence="2">
    <conflict type="erroneous initiation">
        <sequence resource="EMBL-CDS" id="ABV39949"/>
    </conflict>
</comment>
<gene>
    <name evidence="1" type="primary">alaS</name>
    <name type="ordered locus">Spro_0843</name>
</gene>
<reference key="1">
    <citation type="submission" date="2007-09" db="EMBL/GenBank/DDBJ databases">
        <title>Complete sequence of chromosome of Serratia proteamaculans 568.</title>
        <authorList>
            <consortium name="US DOE Joint Genome Institute"/>
            <person name="Copeland A."/>
            <person name="Lucas S."/>
            <person name="Lapidus A."/>
            <person name="Barry K."/>
            <person name="Glavina del Rio T."/>
            <person name="Dalin E."/>
            <person name="Tice H."/>
            <person name="Pitluck S."/>
            <person name="Chain P."/>
            <person name="Malfatti S."/>
            <person name="Shin M."/>
            <person name="Vergez L."/>
            <person name="Schmutz J."/>
            <person name="Larimer F."/>
            <person name="Land M."/>
            <person name="Hauser L."/>
            <person name="Kyrpides N."/>
            <person name="Kim E."/>
            <person name="Taghavi S."/>
            <person name="Newman L."/>
            <person name="Vangronsveld J."/>
            <person name="van der Lelie D."/>
            <person name="Richardson P."/>
        </authorList>
    </citation>
    <scope>NUCLEOTIDE SEQUENCE [LARGE SCALE GENOMIC DNA]</scope>
    <source>
        <strain>568</strain>
    </source>
</reference>
<keyword id="KW-0030">Aminoacyl-tRNA synthetase</keyword>
<keyword id="KW-0067">ATP-binding</keyword>
<keyword id="KW-0963">Cytoplasm</keyword>
<keyword id="KW-0436">Ligase</keyword>
<keyword id="KW-0479">Metal-binding</keyword>
<keyword id="KW-0547">Nucleotide-binding</keyword>
<keyword id="KW-0648">Protein biosynthesis</keyword>
<keyword id="KW-0694">RNA-binding</keyword>
<keyword id="KW-0820">tRNA-binding</keyword>
<keyword id="KW-0862">Zinc</keyword>
<organism>
    <name type="scientific">Serratia proteamaculans (strain 568)</name>
    <dbReference type="NCBI Taxonomy" id="399741"/>
    <lineage>
        <taxon>Bacteria</taxon>
        <taxon>Pseudomonadati</taxon>
        <taxon>Pseudomonadota</taxon>
        <taxon>Gammaproteobacteria</taxon>
        <taxon>Enterobacterales</taxon>
        <taxon>Yersiniaceae</taxon>
        <taxon>Serratia</taxon>
    </lineage>
</organism>
<dbReference type="EC" id="6.1.1.7" evidence="1"/>
<dbReference type="EMBL" id="CP000826">
    <property type="protein sequence ID" value="ABV39949.1"/>
    <property type="status" value="ALT_INIT"/>
    <property type="molecule type" value="Genomic_DNA"/>
</dbReference>
<dbReference type="SMR" id="A8GA09"/>
<dbReference type="STRING" id="399741.Spro_0843"/>
<dbReference type="KEGG" id="spe:Spro_0843"/>
<dbReference type="eggNOG" id="COG0013">
    <property type="taxonomic scope" value="Bacteria"/>
</dbReference>
<dbReference type="HOGENOM" id="CLU_004485_1_1_6"/>
<dbReference type="OrthoDB" id="9803884at2"/>
<dbReference type="GO" id="GO:0005829">
    <property type="term" value="C:cytosol"/>
    <property type="evidence" value="ECO:0007669"/>
    <property type="project" value="TreeGrafter"/>
</dbReference>
<dbReference type="GO" id="GO:0004813">
    <property type="term" value="F:alanine-tRNA ligase activity"/>
    <property type="evidence" value="ECO:0007669"/>
    <property type="project" value="UniProtKB-UniRule"/>
</dbReference>
<dbReference type="GO" id="GO:0002161">
    <property type="term" value="F:aminoacyl-tRNA deacylase activity"/>
    <property type="evidence" value="ECO:0007669"/>
    <property type="project" value="TreeGrafter"/>
</dbReference>
<dbReference type="GO" id="GO:0005524">
    <property type="term" value="F:ATP binding"/>
    <property type="evidence" value="ECO:0007669"/>
    <property type="project" value="UniProtKB-UniRule"/>
</dbReference>
<dbReference type="GO" id="GO:0000049">
    <property type="term" value="F:tRNA binding"/>
    <property type="evidence" value="ECO:0007669"/>
    <property type="project" value="UniProtKB-KW"/>
</dbReference>
<dbReference type="GO" id="GO:0008270">
    <property type="term" value="F:zinc ion binding"/>
    <property type="evidence" value="ECO:0007669"/>
    <property type="project" value="UniProtKB-UniRule"/>
</dbReference>
<dbReference type="GO" id="GO:0006419">
    <property type="term" value="P:alanyl-tRNA aminoacylation"/>
    <property type="evidence" value="ECO:0007669"/>
    <property type="project" value="UniProtKB-UniRule"/>
</dbReference>
<dbReference type="GO" id="GO:0045892">
    <property type="term" value="P:negative regulation of DNA-templated transcription"/>
    <property type="evidence" value="ECO:0007669"/>
    <property type="project" value="TreeGrafter"/>
</dbReference>
<dbReference type="CDD" id="cd00673">
    <property type="entry name" value="AlaRS_core"/>
    <property type="match status" value="1"/>
</dbReference>
<dbReference type="FunFam" id="2.40.30.130:FF:000001">
    <property type="entry name" value="Alanine--tRNA ligase"/>
    <property type="match status" value="1"/>
</dbReference>
<dbReference type="FunFam" id="3.10.310.40:FF:000001">
    <property type="entry name" value="Alanine--tRNA ligase"/>
    <property type="match status" value="1"/>
</dbReference>
<dbReference type="FunFam" id="3.30.54.20:FF:000001">
    <property type="entry name" value="Alanine--tRNA ligase"/>
    <property type="match status" value="1"/>
</dbReference>
<dbReference type="FunFam" id="3.30.930.10:FF:000004">
    <property type="entry name" value="Alanine--tRNA ligase"/>
    <property type="match status" value="1"/>
</dbReference>
<dbReference type="FunFam" id="3.30.980.10:FF:000004">
    <property type="entry name" value="Alanine--tRNA ligase, cytoplasmic"/>
    <property type="match status" value="1"/>
</dbReference>
<dbReference type="Gene3D" id="2.40.30.130">
    <property type="match status" value="1"/>
</dbReference>
<dbReference type="Gene3D" id="3.10.310.40">
    <property type="match status" value="1"/>
</dbReference>
<dbReference type="Gene3D" id="3.30.54.20">
    <property type="match status" value="1"/>
</dbReference>
<dbReference type="Gene3D" id="6.10.250.550">
    <property type="match status" value="1"/>
</dbReference>
<dbReference type="Gene3D" id="3.30.930.10">
    <property type="entry name" value="Bira Bifunctional Protein, Domain 2"/>
    <property type="match status" value="1"/>
</dbReference>
<dbReference type="Gene3D" id="3.30.980.10">
    <property type="entry name" value="Threonyl-trna Synthetase, Chain A, domain 2"/>
    <property type="match status" value="1"/>
</dbReference>
<dbReference type="HAMAP" id="MF_00036_B">
    <property type="entry name" value="Ala_tRNA_synth_B"/>
    <property type="match status" value="1"/>
</dbReference>
<dbReference type="InterPro" id="IPR045864">
    <property type="entry name" value="aa-tRNA-synth_II/BPL/LPL"/>
</dbReference>
<dbReference type="InterPro" id="IPR002318">
    <property type="entry name" value="Ala-tRNA-lgiase_IIc"/>
</dbReference>
<dbReference type="InterPro" id="IPR018162">
    <property type="entry name" value="Ala-tRNA-ligase_IIc_anticod-bd"/>
</dbReference>
<dbReference type="InterPro" id="IPR018165">
    <property type="entry name" value="Ala-tRNA-synth_IIc_core"/>
</dbReference>
<dbReference type="InterPro" id="IPR018164">
    <property type="entry name" value="Ala-tRNA-synth_IIc_N"/>
</dbReference>
<dbReference type="InterPro" id="IPR050058">
    <property type="entry name" value="Ala-tRNA_ligase"/>
</dbReference>
<dbReference type="InterPro" id="IPR023033">
    <property type="entry name" value="Ala_tRNA_ligase_euk/bac"/>
</dbReference>
<dbReference type="InterPro" id="IPR003156">
    <property type="entry name" value="DHHA1_dom"/>
</dbReference>
<dbReference type="InterPro" id="IPR018163">
    <property type="entry name" value="Thr/Ala-tRNA-synth_IIc_edit"/>
</dbReference>
<dbReference type="InterPro" id="IPR009000">
    <property type="entry name" value="Transl_B-barrel_sf"/>
</dbReference>
<dbReference type="InterPro" id="IPR012947">
    <property type="entry name" value="tRNA_SAD"/>
</dbReference>
<dbReference type="NCBIfam" id="TIGR00344">
    <property type="entry name" value="alaS"/>
    <property type="match status" value="1"/>
</dbReference>
<dbReference type="PANTHER" id="PTHR11777:SF9">
    <property type="entry name" value="ALANINE--TRNA LIGASE, CYTOPLASMIC"/>
    <property type="match status" value="1"/>
</dbReference>
<dbReference type="PANTHER" id="PTHR11777">
    <property type="entry name" value="ALANYL-TRNA SYNTHETASE"/>
    <property type="match status" value="1"/>
</dbReference>
<dbReference type="Pfam" id="PF02272">
    <property type="entry name" value="DHHA1"/>
    <property type="match status" value="1"/>
</dbReference>
<dbReference type="Pfam" id="PF01411">
    <property type="entry name" value="tRNA-synt_2c"/>
    <property type="match status" value="1"/>
</dbReference>
<dbReference type="Pfam" id="PF07973">
    <property type="entry name" value="tRNA_SAD"/>
    <property type="match status" value="1"/>
</dbReference>
<dbReference type="PRINTS" id="PR00980">
    <property type="entry name" value="TRNASYNTHALA"/>
</dbReference>
<dbReference type="SMART" id="SM00863">
    <property type="entry name" value="tRNA_SAD"/>
    <property type="match status" value="1"/>
</dbReference>
<dbReference type="SUPFAM" id="SSF55681">
    <property type="entry name" value="Class II aaRS and biotin synthetases"/>
    <property type="match status" value="1"/>
</dbReference>
<dbReference type="SUPFAM" id="SSF101353">
    <property type="entry name" value="Putative anticodon-binding domain of alanyl-tRNA synthetase (AlaRS)"/>
    <property type="match status" value="1"/>
</dbReference>
<dbReference type="SUPFAM" id="SSF55186">
    <property type="entry name" value="ThrRS/AlaRS common domain"/>
    <property type="match status" value="1"/>
</dbReference>
<dbReference type="SUPFAM" id="SSF50447">
    <property type="entry name" value="Translation proteins"/>
    <property type="match status" value="1"/>
</dbReference>
<dbReference type="PROSITE" id="PS50860">
    <property type="entry name" value="AA_TRNA_LIGASE_II_ALA"/>
    <property type="match status" value="1"/>
</dbReference>